<accession>A3Q3B2</accession>
<name>ATPG_MYCSJ</name>
<comment type="function">
    <text evidence="1">Produces ATP from ADP in the presence of a proton gradient across the membrane. The gamma chain is believed to be important in regulating ATPase activity and the flow of protons through the CF(0) complex.</text>
</comment>
<comment type="subunit">
    <text evidence="1">F-type ATPases have 2 components, CF(1) - the catalytic core - and CF(0) - the membrane proton channel. CF(1) has five subunits: alpha(3), beta(3), gamma(1), delta(1), epsilon(1). CF(0) has three main subunits: a, b and c.</text>
</comment>
<comment type="subcellular location">
    <subcellularLocation>
        <location evidence="1">Cell membrane</location>
        <topology evidence="1">Peripheral membrane protein</topology>
    </subcellularLocation>
</comment>
<comment type="similarity">
    <text evidence="1">Belongs to the ATPase gamma chain family.</text>
</comment>
<keyword id="KW-0066">ATP synthesis</keyword>
<keyword id="KW-1003">Cell membrane</keyword>
<keyword id="KW-0139">CF(1)</keyword>
<keyword id="KW-0375">Hydrogen ion transport</keyword>
<keyword id="KW-0406">Ion transport</keyword>
<keyword id="KW-0472">Membrane</keyword>
<keyword id="KW-0813">Transport</keyword>
<proteinExistence type="inferred from homology"/>
<protein>
    <recommendedName>
        <fullName evidence="1">ATP synthase gamma chain</fullName>
    </recommendedName>
    <alternativeName>
        <fullName evidence="1">ATP synthase F1 sector gamma subunit</fullName>
    </alternativeName>
    <alternativeName>
        <fullName evidence="1">F-ATPase gamma subunit</fullName>
    </alternativeName>
</protein>
<gene>
    <name evidence="1" type="primary">atpG</name>
    <name type="ordered locus">Mjls_3863</name>
</gene>
<evidence type="ECO:0000255" key="1">
    <source>
        <dbReference type="HAMAP-Rule" id="MF_00815"/>
    </source>
</evidence>
<organism>
    <name type="scientific">Mycobacterium sp. (strain JLS)</name>
    <dbReference type="NCBI Taxonomy" id="164757"/>
    <lineage>
        <taxon>Bacteria</taxon>
        <taxon>Bacillati</taxon>
        <taxon>Actinomycetota</taxon>
        <taxon>Actinomycetes</taxon>
        <taxon>Mycobacteriales</taxon>
        <taxon>Mycobacteriaceae</taxon>
        <taxon>Mycobacterium</taxon>
    </lineage>
</organism>
<reference key="1">
    <citation type="submission" date="2007-02" db="EMBL/GenBank/DDBJ databases">
        <title>Complete sequence of Mycobacterium sp. JLS.</title>
        <authorList>
            <consortium name="US DOE Joint Genome Institute"/>
            <person name="Copeland A."/>
            <person name="Lucas S."/>
            <person name="Lapidus A."/>
            <person name="Barry K."/>
            <person name="Detter J.C."/>
            <person name="Glavina del Rio T."/>
            <person name="Hammon N."/>
            <person name="Israni S."/>
            <person name="Dalin E."/>
            <person name="Tice H."/>
            <person name="Pitluck S."/>
            <person name="Chain P."/>
            <person name="Malfatti S."/>
            <person name="Shin M."/>
            <person name="Vergez L."/>
            <person name="Schmutz J."/>
            <person name="Larimer F."/>
            <person name="Land M."/>
            <person name="Hauser L."/>
            <person name="Kyrpides N."/>
            <person name="Mikhailova N."/>
            <person name="Miller C.D."/>
            <person name="Anderson A.J."/>
            <person name="Sims R.C."/>
            <person name="Richardson P."/>
        </authorList>
    </citation>
    <scope>NUCLEOTIDE SEQUENCE [LARGE SCALE GENOMIC DNA]</scope>
    <source>
        <strain>JLS</strain>
    </source>
</reference>
<dbReference type="EMBL" id="CP000580">
    <property type="protein sequence ID" value="ABN99639.1"/>
    <property type="molecule type" value="Genomic_DNA"/>
</dbReference>
<dbReference type="SMR" id="A3Q3B2"/>
<dbReference type="KEGG" id="mjl:Mjls_3863"/>
<dbReference type="HOGENOM" id="CLU_050669_0_0_11"/>
<dbReference type="BioCyc" id="MSP164757:G1G8C-3903-MONOMER"/>
<dbReference type="GO" id="GO:0005886">
    <property type="term" value="C:plasma membrane"/>
    <property type="evidence" value="ECO:0007669"/>
    <property type="project" value="UniProtKB-SubCell"/>
</dbReference>
<dbReference type="GO" id="GO:0045259">
    <property type="term" value="C:proton-transporting ATP synthase complex"/>
    <property type="evidence" value="ECO:0007669"/>
    <property type="project" value="UniProtKB-KW"/>
</dbReference>
<dbReference type="GO" id="GO:0005524">
    <property type="term" value="F:ATP binding"/>
    <property type="evidence" value="ECO:0007669"/>
    <property type="project" value="UniProtKB-UniRule"/>
</dbReference>
<dbReference type="GO" id="GO:0046933">
    <property type="term" value="F:proton-transporting ATP synthase activity, rotational mechanism"/>
    <property type="evidence" value="ECO:0007669"/>
    <property type="project" value="UniProtKB-UniRule"/>
</dbReference>
<dbReference type="GO" id="GO:0042777">
    <property type="term" value="P:proton motive force-driven plasma membrane ATP synthesis"/>
    <property type="evidence" value="ECO:0007669"/>
    <property type="project" value="UniProtKB-UniRule"/>
</dbReference>
<dbReference type="CDD" id="cd12151">
    <property type="entry name" value="F1-ATPase_gamma"/>
    <property type="match status" value="1"/>
</dbReference>
<dbReference type="Gene3D" id="3.40.1380.10">
    <property type="match status" value="1"/>
</dbReference>
<dbReference type="Gene3D" id="1.10.287.80">
    <property type="entry name" value="ATP synthase, gamma subunit, helix hairpin domain"/>
    <property type="match status" value="1"/>
</dbReference>
<dbReference type="HAMAP" id="MF_00815">
    <property type="entry name" value="ATP_synth_gamma_bact"/>
    <property type="match status" value="1"/>
</dbReference>
<dbReference type="InterPro" id="IPR035968">
    <property type="entry name" value="ATP_synth_F1_ATPase_gsu"/>
</dbReference>
<dbReference type="InterPro" id="IPR000131">
    <property type="entry name" value="ATP_synth_F1_gsu"/>
</dbReference>
<dbReference type="InterPro" id="IPR023632">
    <property type="entry name" value="ATP_synth_F1_gsu_CS"/>
</dbReference>
<dbReference type="NCBIfam" id="TIGR01146">
    <property type="entry name" value="ATPsyn_F1gamma"/>
    <property type="match status" value="1"/>
</dbReference>
<dbReference type="NCBIfam" id="NF004145">
    <property type="entry name" value="PRK05621.1-2"/>
    <property type="match status" value="1"/>
</dbReference>
<dbReference type="PANTHER" id="PTHR11693">
    <property type="entry name" value="ATP SYNTHASE GAMMA CHAIN"/>
    <property type="match status" value="1"/>
</dbReference>
<dbReference type="PANTHER" id="PTHR11693:SF22">
    <property type="entry name" value="ATP SYNTHASE SUBUNIT GAMMA, MITOCHONDRIAL"/>
    <property type="match status" value="1"/>
</dbReference>
<dbReference type="Pfam" id="PF00231">
    <property type="entry name" value="ATP-synt"/>
    <property type="match status" value="1"/>
</dbReference>
<dbReference type="PRINTS" id="PR00126">
    <property type="entry name" value="ATPASEGAMMA"/>
</dbReference>
<dbReference type="SUPFAM" id="SSF52943">
    <property type="entry name" value="ATP synthase (F1-ATPase), gamma subunit"/>
    <property type="match status" value="1"/>
</dbReference>
<dbReference type="PROSITE" id="PS00153">
    <property type="entry name" value="ATPASE_GAMMA"/>
    <property type="match status" value="1"/>
</dbReference>
<feature type="chain" id="PRO_1000053258" description="ATP synthase gamma chain">
    <location>
        <begin position="1"/>
        <end position="309"/>
    </location>
</feature>
<sequence>MAATLRELRGRIRSAGSIKKITKAQEMIATSRIAKAQARVEAARPYDREITNMLTELATASALDHPLLVQRENPRRAGVLVVSSDRGLAGAYNANVFRRSEELFSLLREEGKEPVLYVVGRKALSYYSFRNWDVTESWSGFSERPEYEHAQEIGETLVKAFMAGVDDEGDDAGADGILGLDELHIVFTEFRSMLSQSAIARRIAPMVVEYSEEDTNEPHTLFSFEPSAETLFDALLPRYVSTRIFAAMLEAAASESASRRRAMKSASDNADDLIKDLTLMANRERQSQITQEISEIVGGANALADAAKK</sequence>